<gene>
    <name type="primary">bphB</name>
</gene>
<organism>
    <name type="scientific">Rhodococcus globerulus</name>
    <dbReference type="NCBI Taxonomy" id="33008"/>
    <lineage>
        <taxon>Bacteria</taxon>
        <taxon>Bacillati</taxon>
        <taxon>Actinomycetota</taxon>
        <taxon>Actinomycetes</taxon>
        <taxon>Mycobacteriales</taxon>
        <taxon>Nocardiaceae</taxon>
        <taxon>Rhodococcus</taxon>
    </lineage>
</organism>
<comment type="catalytic activity">
    <reaction>
        <text>(2R,3S)-3-phenylcyclohexa-3,5-diene-1,2-diol + NAD(+) = biphenyl-2,3-diol + NADH + H(+)</text>
        <dbReference type="Rhea" id="RHEA:17033"/>
        <dbReference type="ChEBI" id="CHEBI:15378"/>
        <dbReference type="ChEBI" id="CHEBI:16205"/>
        <dbReference type="ChEBI" id="CHEBI:32922"/>
        <dbReference type="ChEBI" id="CHEBI:57540"/>
        <dbReference type="ChEBI" id="CHEBI:57945"/>
        <dbReference type="EC" id="1.3.1.56"/>
    </reaction>
</comment>
<comment type="pathway">
    <text>Xenobiotic degradation; biphenyl degradation; 2-hydroxy-2,4-pentadienoate and benzoate from biphenyl: step 2/4.</text>
</comment>
<comment type="miscellaneous">
    <text>Has a 50-fold preference for NAD over NADP.</text>
</comment>
<comment type="similarity">
    <text evidence="3">Belongs to the short-chain dehydrogenases/reductases (SDR) family.</text>
</comment>
<dbReference type="EC" id="1.3.1.56"/>
<dbReference type="EMBL" id="X75633">
    <property type="protein sequence ID" value="CAA53296.1"/>
    <property type="molecule type" value="Genomic_DNA"/>
</dbReference>
<dbReference type="PIR" id="A53419">
    <property type="entry name" value="A53419"/>
</dbReference>
<dbReference type="SMR" id="P47230"/>
<dbReference type="UniPathway" id="UPA00155">
    <property type="reaction ID" value="UER00251"/>
</dbReference>
<dbReference type="GO" id="GO:0018509">
    <property type="term" value="F:cis-2,3-dihydrobiphenyl-2,3-diol dehydrogenase activity"/>
    <property type="evidence" value="ECO:0007669"/>
    <property type="project" value="UniProtKB-EC"/>
</dbReference>
<dbReference type="GO" id="GO:0016616">
    <property type="term" value="F:oxidoreductase activity, acting on the CH-OH group of donors, NAD or NADP as acceptor"/>
    <property type="evidence" value="ECO:0007669"/>
    <property type="project" value="TreeGrafter"/>
</dbReference>
<dbReference type="GO" id="GO:0009056">
    <property type="term" value="P:catabolic process"/>
    <property type="evidence" value="ECO:0007669"/>
    <property type="project" value="UniProtKB-KW"/>
</dbReference>
<dbReference type="CDD" id="cd05348">
    <property type="entry name" value="BphB-like_SDR_c"/>
    <property type="match status" value="1"/>
</dbReference>
<dbReference type="Gene3D" id="3.40.50.720">
    <property type="entry name" value="NAD(P)-binding Rossmann-like Domain"/>
    <property type="match status" value="1"/>
</dbReference>
<dbReference type="InterPro" id="IPR047950">
    <property type="entry name" value="BphB-like_SDR"/>
</dbReference>
<dbReference type="InterPro" id="IPR017711">
    <property type="entry name" value="BphB_TodD"/>
</dbReference>
<dbReference type="InterPro" id="IPR036291">
    <property type="entry name" value="NAD(P)-bd_dom_sf"/>
</dbReference>
<dbReference type="InterPro" id="IPR020904">
    <property type="entry name" value="Sc_DH/Rdtase_CS"/>
</dbReference>
<dbReference type="InterPro" id="IPR002347">
    <property type="entry name" value="SDR_fam"/>
</dbReference>
<dbReference type="NCBIfam" id="TIGR03325">
    <property type="entry name" value="BphB_TodD"/>
    <property type="match status" value="1"/>
</dbReference>
<dbReference type="NCBIfam" id="NF004849">
    <property type="entry name" value="PRK06200.1"/>
    <property type="match status" value="1"/>
</dbReference>
<dbReference type="PANTHER" id="PTHR42760">
    <property type="entry name" value="SHORT-CHAIN DEHYDROGENASES/REDUCTASES FAMILY MEMBER"/>
    <property type="match status" value="1"/>
</dbReference>
<dbReference type="Pfam" id="PF00106">
    <property type="entry name" value="adh_short"/>
    <property type="match status" value="1"/>
</dbReference>
<dbReference type="PRINTS" id="PR00081">
    <property type="entry name" value="GDHRDH"/>
</dbReference>
<dbReference type="SUPFAM" id="SSF51735">
    <property type="entry name" value="NAD(P)-binding Rossmann-fold domains"/>
    <property type="match status" value="1"/>
</dbReference>
<dbReference type="PROSITE" id="PS00061">
    <property type="entry name" value="ADH_SHORT"/>
    <property type="match status" value="1"/>
</dbReference>
<feature type="chain" id="PRO_0000054536" description="Cis-2,3-dihydrobiphenyl-2,3-diol dehydrogenase">
    <location>
        <begin position="1"/>
        <end position="280"/>
    </location>
</feature>
<feature type="active site" description="Proton acceptor" evidence="2">
    <location>
        <position position="155"/>
    </location>
</feature>
<feature type="binding site" evidence="1">
    <location>
        <begin position="9"/>
        <end position="33"/>
    </location>
    <ligand>
        <name>NAD(+)</name>
        <dbReference type="ChEBI" id="CHEBI:57540"/>
    </ligand>
</feature>
<feature type="binding site" evidence="1">
    <location>
        <position position="142"/>
    </location>
    <ligand>
        <name>substrate</name>
    </ligand>
</feature>
<reference key="1">
    <citation type="journal article" date="1994" name="J. Biol. Chem.">
        <title>Analysis of three 2,3-dihydroxybiphenyl 1,2-dioxygenases found in Rhodococcus globerulus P6. Identification of a new family of extradiol dioxygenases.</title>
        <authorList>
            <person name="Asturias J.A."/>
            <person name="Eltis L.D."/>
            <person name="Prucha M."/>
            <person name="Timmis K.N."/>
        </authorList>
    </citation>
    <scope>NUCLEOTIDE SEQUENCE [GENOMIC DNA]</scope>
    <source>
        <strain>P6</strain>
    </source>
</reference>
<protein>
    <recommendedName>
        <fullName>Cis-2,3-dihydrobiphenyl-2,3-diol dehydrogenase</fullName>
        <ecNumber>1.3.1.56</ecNumber>
    </recommendedName>
    <alternativeName>
        <fullName>2,3-dihydro-2,3-dihydroxybiphenyl dehydrogenase</fullName>
    </alternativeName>
    <alternativeName>
        <fullName>2,3-dihydroxy-4-phenylhexa-4,6-diene dehydrogenase</fullName>
    </alternativeName>
    <alternativeName>
        <fullName>Biphenyl-2,3-dihydro-2,3-diol dehydrogenase</fullName>
    </alternativeName>
    <alternativeName>
        <fullName>Biphenyl-cis-diol dehydrogenase</fullName>
    </alternativeName>
</protein>
<sequence>MRLQDEVVLVTGGCAGLGRAIVDRFVCEGARVAVLDRSVAGLEELRAAHGDAVVAVEGDVRYLDSHKETVAKCVETFGKLDCYIGNAGVWDYSTALVEIPEDRLDEAFDEMYSINVKGYLLGVKAALGALYASRGSVIFTVSNAGFYPAGGGALYTGAKHAIVGMVKQLAYELGPHIRVNGIAPGGLGGSDLRGLKALDLAEVSLSKVPLGDMLKDILPTGQMASAEESTGAYVFFATRSETVPLTGSVLNYDGGIGVRGMSEANRGDLLDQFYSKGALV</sequence>
<name>BPHB_RHOGO</name>
<accession>P47230</accession>
<evidence type="ECO:0000250" key="1"/>
<evidence type="ECO:0000255" key="2">
    <source>
        <dbReference type="PROSITE-ProRule" id="PRU10001"/>
    </source>
</evidence>
<evidence type="ECO:0000305" key="3"/>
<proteinExistence type="inferred from homology"/>
<keyword id="KW-0058">Aromatic hydrocarbons catabolism</keyword>
<keyword id="KW-0520">NAD</keyword>
<keyword id="KW-0560">Oxidoreductase</keyword>